<organism>
    <name type="scientific">Haemophilus influenzae (strain ATCC 51907 / DSM 11121 / KW20 / Rd)</name>
    <dbReference type="NCBI Taxonomy" id="71421"/>
    <lineage>
        <taxon>Bacteria</taxon>
        <taxon>Pseudomonadati</taxon>
        <taxon>Pseudomonadota</taxon>
        <taxon>Gammaproteobacteria</taxon>
        <taxon>Pasteurellales</taxon>
        <taxon>Pasteurellaceae</taxon>
        <taxon>Haemophilus</taxon>
    </lineage>
</organism>
<dbReference type="EC" id="3.4.-.-" evidence="2"/>
<dbReference type="EMBL" id="L42023">
    <property type="protein sequence ID" value="AAC22077.1"/>
    <property type="molecule type" value="Genomic_DNA"/>
</dbReference>
<dbReference type="PIR" id="G64066">
    <property type="entry name" value="G64066"/>
</dbReference>
<dbReference type="RefSeq" id="NP_438581.1">
    <property type="nucleotide sequence ID" value="NC_000907.1"/>
</dbReference>
<dbReference type="SMR" id="P44700"/>
<dbReference type="STRING" id="71421.HI_0419"/>
<dbReference type="MEROPS" id="U32.002"/>
<dbReference type="EnsemblBacteria" id="AAC22077">
    <property type="protein sequence ID" value="AAC22077"/>
    <property type="gene ID" value="HI_0419"/>
</dbReference>
<dbReference type="KEGG" id="hin:HI_0419"/>
<dbReference type="PATRIC" id="fig|71421.8.peg.439"/>
<dbReference type="eggNOG" id="COG0826">
    <property type="taxonomic scope" value="Bacteria"/>
</dbReference>
<dbReference type="HOGENOM" id="CLU_011540_0_2_6"/>
<dbReference type="OrthoDB" id="9807498at2"/>
<dbReference type="PhylomeDB" id="P44700"/>
<dbReference type="BioCyc" id="HINF71421:G1GJ1-434-MONOMER"/>
<dbReference type="Proteomes" id="UP000000579">
    <property type="component" value="Chromosome"/>
</dbReference>
<dbReference type="GO" id="GO:0005829">
    <property type="term" value="C:cytosol"/>
    <property type="evidence" value="ECO:0000318"/>
    <property type="project" value="GO_Central"/>
</dbReference>
<dbReference type="GO" id="GO:0008233">
    <property type="term" value="F:peptidase activity"/>
    <property type="evidence" value="ECO:0007669"/>
    <property type="project" value="UniProtKB-KW"/>
</dbReference>
<dbReference type="GO" id="GO:0006508">
    <property type="term" value="P:proteolysis"/>
    <property type="evidence" value="ECO:0007669"/>
    <property type="project" value="UniProtKB-KW"/>
</dbReference>
<dbReference type="GO" id="GO:0008033">
    <property type="term" value="P:tRNA processing"/>
    <property type="evidence" value="ECO:0007669"/>
    <property type="project" value="UniProtKB-KW"/>
</dbReference>
<dbReference type="FunFam" id="2.40.30.10:FF:000039">
    <property type="entry name" value="U32 family peptidase"/>
    <property type="match status" value="1"/>
</dbReference>
<dbReference type="Gene3D" id="2.40.30.10">
    <property type="entry name" value="Translation factors"/>
    <property type="match status" value="1"/>
</dbReference>
<dbReference type="InterPro" id="IPR001539">
    <property type="entry name" value="Peptidase_U32"/>
</dbReference>
<dbReference type="InterPro" id="IPR032525">
    <property type="entry name" value="Peptidase_U32_C"/>
</dbReference>
<dbReference type="InterPro" id="IPR051454">
    <property type="entry name" value="RNA/ubiquinone_mod_enzymes"/>
</dbReference>
<dbReference type="NCBIfam" id="NF011996">
    <property type="entry name" value="PRK15452.1"/>
    <property type="match status" value="1"/>
</dbReference>
<dbReference type="PANTHER" id="PTHR30217">
    <property type="entry name" value="PEPTIDASE U32 FAMILY"/>
    <property type="match status" value="1"/>
</dbReference>
<dbReference type="PANTHER" id="PTHR30217:SF6">
    <property type="entry name" value="TRNA HYDROXYLATION PROTEIN P"/>
    <property type="match status" value="1"/>
</dbReference>
<dbReference type="Pfam" id="PF01136">
    <property type="entry name" value="Peptidase_U32"/>
    <property type="match status" value="1"/>
</dbReference>
<dbReference type="Pfam" id="PF16325">
    <property type="entry name" value="Peptidase_U32_C"/>
    <property type="match status" value="1"/>
</dbReference>
<dbReference type="PROSITE" id="PS01276">
    <property type="entry name" value="PEPTIDASE_U32"/>
    <property type="match status" value="1"/>
</dbReference>
<feature type="chain" id="PRO_0000079185" description="tRNA hydroxylation protein P">
    <location>
        <begin position="1"/>
        <end position="460"/>
    </location>
</feature>
<name>TRHP_HAEIN</name>
<keyword id="KW-0378">Hydrolase</keyword>
<keyword id="KW-0645">Protease</keyword>
<keyword id="KW-1185">Reference proteome</keyword>
<keyword id="KW-0819">tRNA processing</keyword>
<sequence length="460" mass="52126">MTTQFKPELLSPAGSLKNMRYAFAYGADAVYAGQPRYSLRVRNNEFNHANLKIGIDEAHSLGKKFYVVVNIAPHNSKLKTFIKDLQPVIDMKPDALIMSDPGLIMLVRENFPNIDIHLSVQANAVNWATVKFWKQMGLTRVILSRELSIDEIAEIRQQVPDIELEIFVHGALCMAYSGRCLLSGYINKRDPNQGTCTNACRWEYKMEEGTTDDVGNIVPKIDPAQQIEVKNVAPTLGEGAVTDKVFLYTESQKPDEQMTAFEDKHGTYFMNSKDLRAVQHVEKLTALGVHSLKIEGRTKSFYYCARTAQVYRKAIDDAAAGKPFDESLMDTLESLAHRGYTEGFLRRHTHDEYQNYEYGYSISDRQQFVGEFTGKRNEQGMAEVAVKNKFLLGDNVEMMTPQGNINFKIEKMLNRKNETVDAALGDGHFVFLNVPQDINLNYALLMRNLVNTNTRNPHSN</sequence>
<reference key="1">
    <citation type="journal article" date="1995" name="Science">
        <title>Whole-genome random sequencing and assembly of Haemophilus influenzae Rd.</title>
        <authorList>
            <person name="Fleischmann R.D."/>
            <person name="Adams M.D."/>
            <person name="White O."/>
            <person name="Clayton R.A."/>
            <person name="Kirkness E.F."/>
            <person name="Kerlavage A.R."/>
            <person name="Bult C.J."/>
            <person name="Tomb J.-F."/>
            <person name="Dougherty B.A."/>
            <person name="Merrick J.M."/>
            <person name="McKenney K."/>
            <person name="Sutton G.G."/>
            <person name="FitzHugh W."/>
            <person name="Fields C.A."/>
            <person name="Gocayne J.D."/>
            <person name="Scott J.D."/>
            <person name="Shirley R."/>
            <person name="Liu L.-I."/>
            <person name="Glodek A."/>
            <person name="Kelley J.M."/>
            <person name="Weidman J.F."/>
            <person name="Phillips C.A."/>
            <person name="Spriggs T."/>
            <person name="Hedblom E."/>
            <person name="Cotton M.D."/>
            <person name="Utterback T.R."/>
            <person name="Hanna M.C."/>
            <person name="Nguyen D.T."/>
            <person name="Saudek D.M."/>
            <person name="Brandon R.C."/>
            <person name="Fine L.D."/>
            <person name="Fritchman J.L."/>
            <person name="Fuhrmann J.L."/>
            <person name="Geoghagen N.S.M."/>
            <person name="Gnehm C.L."/>
            <person name="McDonald L.A."/>
            <person name="Small K.V."/>
            <person name="Fraser C.M."/>
            <person name="Smith H.O."/>
            <person name="Venter J.C."/>
        </authorList>
    </citation>
    <scope>NUCLEOTIDE SEQUENCE [LARGE SCALE GENOMIC DNA]</scope>
    <source>
        <strain>ATCC 51907 / DSM 11121 / KW20 / Rd</strain>
    </source>
</reference>
<comment type="function">
    <text evidence="1">Involved in prephenate-dependent formation of 5-hydroxyuridine (ho5U) modification at position 34 in tRNAs, the first step in 5-carboxymethoxyuridine (cmo5U) biosynthesis.</text>
</comment>
<comment type="similarity">
    <text evidence="2">Belongs to the peptidase U32 family.</text>
</comment>
<protein>
    <recommendedName>
        <fullName evidence="1">tRNA hydroxylation protein P</fullName>
        <ecNumber evidence="2">3.4.-.-</ecNumber>
    </recommendedName>
</protein>
<accession>P44700</accession>
<evidence type="ECO:0000250" key="1">
    <source>
        <dbReference type="UniProtKB" id="P76403"/>
    </source>
</evidence>
<evidence type="ECO:0000305" key="2"/>
<proteinExistence type="inferred from homology"/>
<gene>
    <name evidence="1" type="primary">trhP</name>
    <name type="ordered locus">HI_0419</name>
</gene>